<reference key="1">
    <citation type="journal article" date="1978" name="Nature">
        <title>Sequence of chicken ovalbumin mRNA.</title>
        <authorList>
            <person name="McReynolds L."/>
            <person name="O'Malley B.W."/>
            <person name="Nisbet A.D."/>
            <person name="Fothergill J.E."/>
            <person name="Givol D."/>
            <person name="Fields S."/>
            <person name="Robertson M."/>
            <person name="Brownlee G.G."/>
        </authorList>
    </citation>
    <scope>NUCLEOTIDE SEQUENCE [MRNA]</scope>
</reference>
<reference key="2">
    <citation type="journal article" date="1978" name="Nature">
        <title>Nucleotide sequence homology at 12 intron-exon junctions in the chick ovalbumin gene.</title>
        <authorList>
            <person name="Catterall J.F."/>
            <person name="O'Malley B.W."/>
            <person name="Robertson M.A."/>
            <person name="Staden R."/>
            <person name="Tanaka Y."/>
            <person name="Brownlee G.G."/>
        </authorList>
    </citation>
    <scope>NUCLEOTIDE SEQUENCE [GENOMIC DNA]</scope>
</reference>
<reference key="3">
    <citation type="journal article" date="1981" name="Biochemistry">
        <title>Complete nucleotide sequence of the chicken chromosomal ovalbumin gene and its biological significance.</title>
        <authorList>
            <person name="Woo S.L.C."/>
            <person name="Beattie W.G."/>
            <person name="Catterall J.F."/>
            <person name="Dugaiczyk A."/>
            <person name="Staden R."/>
            <person name="Brownlee G.G."/>
            <person name="O'Malley B.W."/>
        </authorList>
    </citation>
    <scope>NUCLEOTIDE SEQUENCE [GENOMIC DNA]</scope>
</reference>
<reference key="4">
    <citation type="submission" date="2003-01" db="EMBL/GenBank/DDBJ databases">
        <title>Ovalbumin from the chicken called Mangyondak in North Korea.</title>
        <authorList>
            <person name="Kim R."/>
            <person name="Rim D."/>
            <person name="Li Y."/>
        </authorList>
    </citation>
    <scope>NUCLEOTIDE SEQUENCE [MRNA]</scope>
    <scope>VARIANT PHE-283</scope>
    <source>
        <strain>Mangyondak</strain>
    </source>
</reference>
<reference key="5">
    <citation type="journal article" date="1979" name="Nature">
        <title>Sequence of three introns in the chick ovalbumin gene.</title>
        <authorList>
            <person name="Robertson M.A."/>
            <person name="Staden R."/>
            <person name="Tanaka Y."/>
            <person name="Catterall J.F."/>
            <person name="O'Malley B.W."/>
            <person name="Brownlee G.G."/>
        </authorList>
    </citation>
    <scope>NUCLEOTIDE SEQUENCE [GENOMIC DNA] OF 1-155</scope>
</reference>
<reference key="6">
    <citation type="journal article" date="1978" name="Aust. J. Biol. Sci.">
        <title>A correction and extension of the acetylated amino terminal sequence of ovalbumin.</title>
        <authorList>
            <person name="Thompson E.O.P."/>
            <person name="Fisher W.K."/>
        </authorList>
    </citation>
    <scope>PROTEIN SEQUENCE OF 2-17</scope>
    <scope>ACETYLATION AT GLY-2</scope>
</reference>
<reference key="7">
    <citation type="journal article" date="1978" name="Proc. Natl. Acad. Sci. U.S.A.">
        <title>Ovalbumin: a secreted protein without a transient hydrophobic leader sequence.</title>
        <authorList>
            <person name="Palmiter R.D."/>
            <person name="Gagnon J."/>
            <person name="Walsh K.A."/>
        </authorList>
    </citation>
    <scope>PROTEIN SEQUENCE OF 2-36</scope>
    <scope>ACETYLATION AT GLY-2</scope>
</reference>
<reference key="8">
    <citation type="journal article" date="1978" name="Aust. J. Biol. Sci.">
        <title>Amino acid sequences containing half-cystine residues in ovalbumin.</title>
        <authorList>
            <person name="Thompson E.O.P."/>
            <person name="Fisher W.K."/>
        </authorList>
    </citation>
    <scope>PROTEIN SEQUENCE OF 6-17; 30-36; 61-79; 116-124; 367-374 AND 380-386</scope>
</reference>
<reference key="9">
    <citation type="journal article" date="1981" name="Eur. J. Biochem.">
        <title>Sequences of sixteen phosphoserine peptides from ovalbumins of eight species.</title>
        <authorList>
            <person name="Henderson J.Y."/>
            <person name="Moir A.J.G."/>
            <person name="Fothergill L.A."/>
            <person name="Fothergill J.E."/>
        </authorList>
    </citation>
    <scope>PROTEIN SEQUENCE OF 60-85 AND 338-360</scope>
    <scope>PHOSPHORYLATION AT SER-69 AND SER-345</scope>
</reference>
<reference key="10">
    <citation type="journal article" date="2014" name="J. Agric. Food Chem.">
        <title>Differential abundance of egg white proteins in laying hens treated with corticosterone.</title>
        <authorList>
            <person name="Kim J."/>
            <person name="Choi Y.H."/>
        </authorList>
    </citation>
    <scope>PROTEIN SEQUENCE OF 85-106; 105-124; 111-124; 127-144; 143-160; 187-201; 200-220; 264-279; 323-341; 360-371 AND 370-383</scope>
    <scope>TISSUE SPECIFICITY</scope>
    <scope>INDUCTION</scope>
    <scope>IDENTIFICATION BY MASS SPECTROMETRY</scope>
    <source>
        <tissue evidence="13">Egg white</tissue>
    </source>
</reference>
<reference key="11">
    <citation type="journal article" date="2002" name="Biochem. J.">
        <title>Probing the serpin structural-transition mechanism in ovalbumin mutant R339T by proteolytic-cleavage kinetics of the reactive-centre loop.</title>
        <authorList>
            <person name="Arii Y."/>
            <person name="Hirose M."/>
        </authorList>
    </citation>
    <scope>PROTEIN SEQUENCE OF 354-359</scope>
    <scope>PROTEOLYTIC CLEAVAGE AT ALA-353 AND PHE-359</scope>
    <scope>MUTAGENESIS OF ARG-340</scope>
</reference>
<reference key="12">
    <citation type="journal article" date="1982" name="J. Biol. Chem.">
        <title>The signal sequence of ovalbumin is located near the NH2 terminus.</title>
        <authorList>
            <person name="Meek R.L."/>
            <person name="Walsh K.A."/>
            <person name="Palmiter R.D."/>
        </authorList>
    </citation>
    <scope>FUNCTION OF UNCLEAVED SIGNAL PEPTIDE</scope>
    <scope>SUBCELLULAR LOCATION</scope>
</reference>
<reference key="13">
    <citation type="journal article" date="1986" name="FEBS Lett.">
        <title>Isolation and properties of the signal region from ovalbumin.</title>
        <authorList>
            <person name="Robinson A."/>
            <person name="Meredith C."/>
            <person name="Austen B.M."/>
        </authorList>
    </citation>
    <scope>FUNCTION OF UNCLEAVED SIGNAL PEPTIDE</scope>
</reference>
<reference key="14">
    <citation type="journal article" date="2009" name="Anal. Chem.">
        <title>Site-specific glycoprofiling of N-linked glycopeptides using MALDI-TOF MS: strong correlation between signal strength and glycoform quantities.</title>
        <authorList>
            <person name="Thaysen-Andersen M."/>
            <person name="Mysling S."/>
            <person name="Hojrup P."/>
        </authorList>
    </citation>
    <scope>GLYCOSYLATION AT ASN-293</scope>
</reference>
<reference key="15">
    <citation type="journal article" date="2010" name="Protein Sci.">
        <title>Thermostabilization of ovalbumin by alkaline treatment: Examination of the possible roles of D-serine residues.</title>
        <authorList>
            <person name="Ishimaru T."/>
            <person name="Ito K."/>
            <person name="Tanaka M."/>
            <person name="Matsudomi N."/>
        </authorList>
    </citation>
    <scope>THERMOSTABILITY OF N- AND S-CONFORMERS</scope>
</reference>
<reference key="16">
    <citation type="journal article" date="2011" name="Biosci. Biotechnol. Biochem.">
        <title>The role of the disulfide bridge in the stability and structural integrity of ovalbumin evaluated by site-directed mutagenesis.</title>
        <authorList>
            <person name="Ishimaru T."/>
            <person name="Ito K."/>
            <person name="Tanaka M."/>
            <person name="Tanaka S."/>
            <person name="Matsudomi N."/>
        </authorList>
    </citation>
    <scope>DISULFIDE BOND</scope>
    <scope>IDENTIFICATION BY MASS SPECTROMETRY</scope>
    <scope>MUTAGENESIS OF CYS-74 AND CYS-121</scope>
</reference>
<reference key="17">
    <citation type="journal article" date="1990" name="J. Mol. Biol.">
        <title>Crystal structure of plakalbumin, a proteolytically nicked form of ovalbumin. Its relationship to the structure of cleaved alpha-1-proteinase inhibitor.</title>
        <authorList>
            <person name="Wright H.T."/>
            <person name="Qian H.X."/>
            <person name="Huber R."/>
        </authorList>
    </citation>
    <scope>X-RAY CRYSTALLOGRAPHY (2.8 ANGSTROMS)</scope>
</reference>
<reference key="18">
    <citation type="journal article" date="1990" name="Nature">
        <title>Crystal structure of ovalbumin as a model for the reactive centre of serpins.</title>
        <authorList>
            <person name="Stein P.E."/>
            <person name="Leslie A.G.W."/>
            <person name="Finch J.T."/>
            <person name="Turnell W.G."/>
            <person name="McLaughlin P.J."/>
            <person name="Carrell R.W."/>
        </authorList>
    </citation>
    <scope>X-RAY CRYSTALLOGRAPHY (1.95 ANGSTROMS)</scope>
</reference>
<reference key="19">
    <citation type="journal article" date="1991" name="J. Mol. Biol.">
        <title>Crystal structure of uncleaved ovalbumin at 1.95-A resolution.</title>
        <authorList>
            <person name="Stein P.E."/>
            <person name="Leslie A.G.W."/>
            <person name="Finch J.T."/>
            <person name="Carrell R.W."/>
        </authorList>
    </citation>
    <scope>X-RAY CRYSTALLOGRAPHY (1.95 ANGSTROMS)</scope>
    <scope>METAL-BINDING</scope>
    <scope>SUBUNIT</scope>
    <scope>DISULFIDE BOND</scope>
    <scope>GLYCOSYLATION AT ASN-293</scope>
</reference>
<reference key="20">
    <citation type="journal article" date="2002" name="J. Mol. Biol.">
        <title>Loop-inserted and thermostabilized structure of P1-P1' cleaved ovalbumin mutant R339T.</title>
        <authorList>
            <person name="Yamasaki M."/>
            <person name="Arii Y."/>
            <person name="Mikami B."/>
            <person name="Hirose M."/>
        </authorList>
    </citation>
    <scope>X-RAY CRYSTALLOGRAPHY (2.3 ANGSTROMS) OF 2-385 OF MUTANT THR-340</scope>
    <scope>PROTEOLYTIC CLEAVAGE</scope>
</reference>
<sequence>MGSIGAASMEFCFDVFKELKVHHANENIFYCPIAIMSALAMVYLGAKDSTRTQINKVVRFDKLPGFGDSIEAQCGTSVNVHSSLRDILNQITKPNDVYSFSLASRLYAEERYPILPEYLQCVKELYRGGLEPINFQTAADQARELINSWVESQTNGIIRNVLQPSSVDSQTAMVLVNAIVFKGLWEKAFKDEDTQAMPFRVTEQESKPVQMMYQIGLFRVASMASEKMKILELPFASGTMSMLVLLPDEVSGLEQLESIINFEKLTEWTSSNVMEERKIKVYLPRMKMEEKYNLTSVLMAMGITDVFSSSANLSGISSAESLKISQAVHAAHAEINEAGREVVGSAEAGVDAASVSEEFRADHPFLFCIKHIATNAVLFFGRCVSP</sequence>
<gene>
    <name type="primary">SERPINB14</name>
</gene>
<proteinExistence type="evidence at protein level"/>
<comment type="function">
    <text evidence="8 9">Non-inhibitory serpin. Storage protein of egg white.</text>
</comment>
<comment type="subunit">
    <text evidence="4">Homodimer.</text>
</comment>
<comment type="subcellular location">
    <subcellularLocation>
        <location evidence="9">Secreted</location>
    </subcellularLocation>
</comment>
<comment type="tissue specificity">
    <text evidence="6">Major protein of egg white. Expressed in the magnum of the oviduct (at protein level) (PubMed:25436390).</text>
</comment>
<comment type="induction">
    <text evidence="6">Down-regulated by dietary stress. Decreased expression at day 14 in the magnum of the oviduct in the corticosterone-fed laying hens.</text>
</comment>
<comment type="domain">
    <text>The uncleaved signal peptide becomes available for membrane translocation of ovalbumin when the nascent chain is 50 to 60 residues long. The hydrophobic sequence, which lies between residues 27 and 43, folds back on the preceding residues to form an amphipathic hairpin structure which is the signal element recognized by the membrane.</text>
</comment>
<comment type="domain">
    <text>Unlike other serpins, after protease cleavage at the P-P' site, ovalbumin does not have the ability to undergo the conformational transition into the loop-inserted reactive-center-containing thermostabilized form. The bulky arginine residue (Arg-340) at the hinge region appears to be responsible for this lack of loop-inserted conformational change, but not for the absence of serpin inhibitory activity.</text>
</comment>
<comment type="domain">
    <text>During storage of fertilized and non-fertilized eggs or under alkaline conditions, the native ovalbumin conformer (N-ovalbumin) is transformed into a thermostabilized conformer, S-ovalbumin. Ser-165, Ser-237 and Ser-321 take on a D-configuration in this conformer and may be responsible for the thermostability.</text>
</comment>
<comment type="PTM">
    <text evidence="1 2">Undergoes proteolytic cleavage first at the canonical P1-P1' site, and then at the P8-P7 site by subtilisin.</text>
</comment>
<comment type="allergen">
    <text>Can cause an allergic reaction in humans.</text>
</comment>
<comment type="similarity">
    <text evidence="14">Belongs to the serpin family. Ov-serpin subfamily.</text>
</comment>
<feature type="initiator methionine" description="Removed" evidence="7 11">
    <location>
        <position position="1"/>
    </location>
</feature>
<feature type="chain" id="PRO_0000094126" description="Ovalbumin">
    <location>
        <begin position="2"/>
        <end position="386"/>
    </location>
</feature>
<feature type="signal peptide" description="Not cleaved">
    <location>
        <begin position="22"/>
        <end position="48"/>
    </location>
</feature>
<feature type="binding site">
    <location>
        <position position="192"/>
    </location>
    <ligand>
        <name>Ca(2+)</name>
        <dbReference type="ChEBI" id="CHEBI:29108"/>
    </ligand>
</feature>
<feature type="site" description="Cleavage; by elastase or subtilisin" evidence="2">
    <location>
        <begin position="353"/>
        <end position="354"/>
    </location>
</feature>
<feature type="site" description="Cleavage; by subtilisin" evidence="2">
    <location>
        <begin position="359"/>
        <end position="360"/>
    </location>
</feature>
<feature type="modified residue" description="N-acetylglycine" evidence="7 11">
    <location>
        <position position="2"/>
    </location>
</feature>
<feature type="modified residue" description="Phosphoserine" evidence="10">
    <location>
        <position position="69"/>
    </location>
</feature>
<feature type="modified residue" description="Phosphoserine" evidence="10">
    <location>
        <position position="345"/>
    </location>
</feature>
<feature type="glycosylation site" description="N-linked (GlcNAc...) asparagine" evidence="3 4">
    <location>
        <position position="293"/>
    </location>
</feature>
<feature type="disulfide bond" evidence="4 5">
    <location>
        <begin position="74"/>
        <end position="121"/>
    </location>
</feature>
<feature type="sequence variant" description="In strain: Mangyondak." evidence="12">
    <original>L</original>
    <variation>F</variation>
    <location>
        <position position="283"/>
    </location>
</feature>
<feature type="sequence variant" description="In a minor component.">
    <original>N</original>
    <variation>D</variation>
    <location>
        <position position="312"/>
    </location>
</feature>
<feature type="mutagenesis site" description="Lower thermal denaturation temperature, more susceptible to elastase or subtilisin cleavage and assumes a native-like conformation on alkaline treatment; when associated with or without A-121." evidence="5">
    <original>C</original>
    <variation>A</variation>
    <location>
        <position position="74"/>
    </location>
</feature>
<feature type="mutagenesis site" description="Lower thermal denaturation temperature, more susceptible to elastase or subtilisin cleavage and assumes a native-like conformation on alkaline treatment; when associated with or without A-74." evidence="5">
    <original>C</original>
    <variation>A</variation>
    <location>
        <position position="121"/>
    </location>
</feature>
<feature type="mutagenesis site" description="Significantly more thermostabilized following cleavage at P-P' site. Inserts reactive loop at very slow rate. No inhibitory action against serine proteinases." evidence="2">
    <original>R</original>
    <variation>T</variation>
    <location>
        <position position="340"/>
    </location>
</feature>
<feature type="sequence conflict" description="In Ref. 5; CAA23681." evidence="14" ref="5">
    <original>G</original>
    <variation>A</variation>
    <location>
        <position position="5"/>
    </location>
</feature>
<feature type="sequence conflict" description="In Ref. 5; CAA23681." evidence="14" ref="5">
    <original>L</original>
    <variation>F</variation>
    <location>
        <position position="119"/>
    </location>
</feature>
<feature type="sequence conflict" description="In Ref. 1; CAA23682." evidence="14" ref="1">
    <original>A</original>
    <variation>T</variation>
    <location>
        <position position="188"/>
    </location>
</feature>
<feature type="helix" evidence="17">
    <location>
        <begin position="4"/>
        <end position="22"/>
    </location>
</feature>
<feature type="turn" evidence="16">
    <location>
        <begin position="23"/>
        <end position="25"/>
    </location>
</feature>
<feature type="strand" evidence="17">
    <location>
        <begin position="28"/>
        <end position="30"/>
    </location>
</feature>
<feature type="helix" evidence="17">
    <location>
        <begin position="32"/>
        <end position="43"/>
    </location>
</feature>
<feature type="helix" evidence="17">
    <location>
        <begin position="48"/>
        <end position="58"/>
    </location>
</feature>
<feature type="helix" evidence="17">
    <location>
        <begin position="68"/>
        <end position="71"/>
    </location>
</feature>
<feature type="turn" evidence="17">
    <location>
        <begin position="72"/>
        <end position="75"/>
    </location>
</feature>
<feature type="turn" evidence="17">
    <location>
        <begin position="78"/>
        <end position="81"/>
    </location>
</feature>
<feature type="helix" evidence="17">
    <location>
        <begin position="82"/>
        <end position="91"/>
    </location>
</feature>
<feature type="strand" evidence="17">
    <location>
        <begin position="96"/>
        <end position="109"/>
    </location>
</feature>
<feature type="helix" evidence="17">
    <location>
        <begin position="116"/>
        <end position="125"/>
    </location>
</feature>
<feature type="strand" evidence="17">
    <location>
        <begin position="130"/>
        <end position="133"/>
    </location>
</feature>
<feature type="turn" evidence="17">
    <location>
        <begin position="136"/>
        <end position="138"/>
    </location>
</feature>
<feature type="helix" evidence="17">
    <location>
        <begin position="139"/>
        <end position="153"/>
    </location>
</feature>
<feature type="turn" evidence="17">
    <location>
        <begin position="154"/>
        <end position="156"/>
    </location>
</feature>
<feature type="strand" evidence="17">
    <location>
        <begin position="173"/>
        <end position="183"/>
    </location>
</feature>
<feature type="strand" evidence="17">
    <location>
        <begin position="185"/>
        <end position="187"/>
    </location>
</feature>
<feature type="helix" evidence="17">
    <location>
        <begin position="191"/>
        <end position="193"/>
    </location>
</feature>
<feature type="strand" evidence="17">
    <location>
        <begin position="195"/>
        <end position="199"/>
    </location>
</feature>
<feature type="strand" evidence="17">
    <location>
        <begin position="207"/>
        <end position="223"/>
    </location>
</feature>
<feature type="helix" evidence="17">
    <location>
        <begin position="224"/>
        <end position="226"/>
    </location>
</feature>
<feature type="strand" evidence="17">
    <location>
        <begin position="228"/>
        <end position="235"/>
    </location>
</feature>
<feature type="strand" evidence="17">
    <location>
        <begin position="238"/>
        <end position="249"/>
    </location>
</feature>
<feature type="turn" evidence="16">
    <location>
        <begin position="250"/>
        <end position="252"/>
    </location>
</feature>
<feature type="helix" evidence="17">
    <location>
        <begin position="253"/>
        <end position="259"/>
    </location>
</feature>
<feature type="helix" evidence="17">
    <location>
        <begin position="262"/>
        <end position="268"/>
    </location>
</feature>
<feature type="turn" evidence="17">
    <location>
        <begin position="271"/>
        <end position="273"/>
    </location>
</feature>
<feature type="strand" evidence="17">
    <location>
        <begin position="275"/>
        <end position="284"/>
    </location>
</feature>
<feature type="strand" evidence="17">
    <location>
        <begin position="286"/>
        <end position="293"/>
    </location>
</feature>
<feature type="helix" evidence="17">
    <location>
        <begin position="294"/>
        <end position="301"/>
    </location>
</feature>
<feature type="helix" evidence="17">
    <location>
        <begin position="305"/>
        <end position="307"/>
    </location>
</feature>
<feature type="turn" evidence="17">
    <location>
        <begin position="314"/>
        <end position="316"/>
    </location>
</feature>
<feature type="strand" evidence="15">
    <location>
        <begin position="318"/>
        <end position="320"/>
    </location>
</feature>
<feature type="strand" evidence="17">
    <location>
        <begin position="324"/>
        <end position="335"/>
    </location>
</feature>
<feature type="strand" evidence="17">
    <location>
        <begin position="339"/>
        <end position="341"/>
    </location>
</feature>
<feature type="helix" evidence="17">
    <location>
        <begin position="345"/>
        <end position="352"/>
    </location>
</feature>
<feature type="strand" evidence="17">
    <location>
        <begin position="358"/>
        <end position="360"/>
    </location>
</feature>
<feature type="strand" evidence="17">
    <location>
        <begin position="365"/>
        <end position="371"/>
    </location>
</feature>
<feature type="turn" evidence="17">
    <location>
        <begin position="372"/>
        <end position="374"/>
    </location>
</feature>
<feature type="strand" evidence="17">
    <location>
        <begin position="377"/>
        <end position="384"/>
    </location>
</feature>
<keyword id="KW-0002">3D-structure</keyword>
<keyword id="KW-0007">Acetylation</keyword>
<keyword id="KW-0020">Allergen</keyword>
<keyword id="KW-0106">Calcium</keyword>
<keyword id="KW-0903">Direct protein sequencing</keyword>
<keyword id="KW-1015">Disulfide bond</keyword>
<keyword id="KW-0325">Glycoprotein</keyword>
<keyword id="KW-0479">Metal-binding</keyword>
<keyword id="KW-0597">Phosphoprotein</keyword>
<keyword id="KW-1185">Reference proteome</keyword>
<keyword id="KW-0964">Secreted</keyword>
<keyword id="KW-0732">Signal</keyword>
<protein>
    <recommendedName>
        <fullName>Ovalbumin</fullName>
    </recommendedName>
    <alternativeName>
        <fullName>Allergen Gal d II</fullName>
    </alternativeName>
    <alternativeName>
        <fullName>Egg albumin</fullName>
    </alternativeName>
    <alternativeName>
        <fullName>Plakalbumin</fullName>
    </alternativeName>
    <allergenName>Gal d 2</allergenName>
</protein>
<accession>P01012</accession>
<accession>Q804A4</accession>
<accession>Q90741</accession>
<evidence type="ECO:0000269" key="1">
    <source>
    </source>
</evidence>
<evidence type="ECO:0000269" key="2">
    <source>
    </source>
</evidence>
<evidence type="ECO:0000269" key="3">
    <source>
    </source>
</evidence>
<evidence type="ECO:0000269" key="4">
    <source>
    </source>
</evidence>
<evidence type="ECO:0000269" key="5">
    <source>
    </source>
</evidence>
<evidence type="ECO:0000269" key="6">
    <source>
    </source>
</evidence>
<evidence type="ECO:0000269" key="7">
    <source>
    </source>
</evidence>
<evidence type="ECO:0000269" key="8">
    <source>
    </source>
</evidence>
<evidence type="ECO:0000269" key="9">
    <source>
    </source>
</evidence>
<evidence type="ECO:0000269" key="10">
    <source>
    </source>
</evidence>
<evidence type="ECO:0000269" key="11">
    <source>
    </source>
</evidence>
<evidence type="ECO:0000269" key="12">
    <source ref="4"/>
</evidence>
<evidence type="ECO:0000303" key="13">
    <source>
    </source>
</evidence>
<evidence type="ECO:0000305" key="14"/>
<evidence type="ECO:0007829" key="15">
    <source>
        <dbReference type="PDB" id="1JTI"/>
    </source>
</evidence>
<evidence type="ECO:0007829" key="16">
    <source>
        <dbReference type="PDB" id="1OVA"/>
    </source>
</evidence>
<evidence type="ECO:0007829" key="17">
    <source>
        <dbReference type="PDB" id="1UHG"/>
    </source>
</evidence>
<name>OVAL_CHICK</name>
<organism>
    <name type="scientific">Gallus gallus</name>
    <name type="common">Chicken</name>
    <dbReference type="NCBI Taxonomy" id="9031"/>
    <lineage>
        <taxon>Eukaryota</taxon>
        <taxon>Metazoa</taxon>
        <taxon>Chordata</taxon>
        <taxon>Craniata</taxon>
        <taxon>Vertebrata</taxon>
        <taxon>Euteleostomi</taxon>
        <taxon>Archelosauria</taxon>
        <taxon>Archosauria</taxon>
        <taxon>Dinosauria</taxon>
        <taxon>Saurischia</taxon>
        <taxon>Theropoda</taxon>
        <taxon>Coelurosauria</taxon>
        <taxon>Aves</taxon>
        <taxon>Neognathae</taxon>
        <taxon>Galloanserae</taxon>
        <taxon>Galliformes</taxon>
        <taxon>Phasianidae</taxon>
        <taxon>Phasianinae</taxon>
        <taxon>Gallus</taxon>
    </lineage>
</organism>
<dbReference type="EMBL" id="V00383">
    <property type="protein sequence ID" value="CAA23682.1"/>
    <property type="molecule type" value="mRNA"/>
</dbReference>
<dbReference type="EMBL" id="M34352">
    <property type="protein sequence ID" value="AAA48998.1"/>
    <property type="molecule type" value="Genomic_DNA"/>
</dbReference>
<dbReference type="EMBL" id="M34346">
    <property type="protein sequence ID" value="AAA48998.1"/>
    <property type="status" value="JOINED"/>
    <property type="molecule type" value="Genomic_DNA"/>
</dbReference>
<dbReference type="EMBL" id="M34347">
    <property type="protein sequence ID" value="AAA48998.1"/>
    <property type="status" value="JOINED"/>
    <property type="molecule type" value="Genomic_DNA"/>
</dbReference>
<dbReference type="EMBL" id="M34348">
    <property type="protein sequence ID" value="AAA48998.1"/>
    <property type="status" value="JOINED"/>
    <property type="molecule type" value="Genomic_DNA"/>
</dbReference>
<dbReference type="EMBL" id="M34349">
    <property type="protein sequence ID" value="AAA48998.1"/>
    <property type="status" value="JOINED"/>
    <property type="molecule type" value="Genomic_DNA"/>
</dbReference>
<dbReference type="EMBL" id="M34350">
    <property type="protein sequence ID" value="AAA48998.1"/>
    <property type="status" value="JOINED"/>
    <property type="molecule type" value="Genomic_DNA"/>
</dbReference>
<dbReference type="EMBL" id="M34351">
    <property type="protein sequence ID" value="AAA48998.1"/>
    <property type="status" value="JOINED"/>
    <property type="molecule type" value="Genomic_DNA"/>
</dbReference>
<dbReference type="EMBL" id="V00438">
    <property type="protein sequence ID" value="CAA23716.1"/>
    <property type="molecule type" value="Genomic_DNA"/>
</dbReference>
<dbReference type="EMBL" id="J00895">
    <property type="protein sequence ID" value="AAB59956.1"/>
    <property type="molecule type" value="Genomic_DNA"/>
</dbReference>
<dbReference type="EMBL" id="AY223553">
    <property type="protein sequence ID" value="AAO43266.1"/>
    <property type="molecule type" value="mRNA"/>
</dbReference>
<dbReference type="EMBL" id="V00382">
    <property type="protein sequence ID" value="CAA23681.1"/>
    <property type="molecule type" value="Genomic_DNA"/>
</dbReference>
<dbReference type="PIR" id="A90455">
    <property type="entry name" value="OACH"/>
</dbReference>
<dbReference type="RefSeq" id="NP_990483.1">
    <property type="nucleotide sequence ID" value="NM_205152.2"/>
</dbReference>
<dbReference type="PDB" id="1JTI">
    <property type="method" value="X-ray"/>
    <property type="resolution" value="2.30 A"/>
    <property type="chains" value="A/B=2-386"/>
</dbReference>
<dbReference type="PDB" id="1OVA">
    <property type="method" value="X-ray"/>
    <property type="resolution" value="1.95 A"/>
    <property type="chains" value="A/B/C/D=2-386"/>
</dbReference>
<dbReference type="PDB" id="1P1Z">
    <property type="method" value="X-ray"/>
    <property type="resolution" value="3.26 A"/>
    <property type="chains" value="P=258-265"/>
</dbReference>
<dbReference type="PDB" id="1P4L">
    <property type="method" value="X-ray"/>
    <property type="resolution" value="2.90 A"/>
    <property type="chains" value="P=258-265"/>
</dbReference>
<dbReference type="PDB" id="1UHG">
    <property type="method" value="X-ray"/>
    <property type="resolution" value="1.90 A"/>
    <property type="chains" value="A/B/C/D=2-386"/>
</dbReference>
<dbReference type="PDB" id="1VAC">
    <property type="method" value="X-ray"/>
    <property type="resolution" value="2.50 A"/>
    <property type="chains" value="P=258-265"/>
</dbReference>
<dbReference type="PDB" id="3C8K">
    <property type="method" value="X-ray"/>
    <property type="resolution" value="2.90 A"/>
    <property type="chains" value="P=258-265"/>
</dbReference>
<dbReference type="PDB" id="3CVH">
    <property type="method" value="X-ray"/>
    <property type="resolution" value="2.90 A"/>
    <property type="chains" value="C/O=258-265"/>
</dbReference>
<dbReference type="PDB" id="3P9L">
    <property type="method" value="X-ray"/>
    <property type="resolution" value="2.00 A"/>
    <property type="chains" value="C/F=258-265"/>
</dbReference>
<dbReference type="PDB" id="3P9M">
    <property type="method" value="X-ray"/>
    <property type="resolution" value="2.00 A"/>
    <property type="chains" value="C/F=258-265"/>
</dbReference>
<dbReference type="PDB" id="3PAB">
    <property type="method" value="X-ray"/>
    <property type="resolution" value="2.20 A"/>
    <property type="chains" value="C/F=258-265"/>
</dbReference>
<dbReference type="PDB" id="4HKJ">
    <property type="method" value="X-ray"/>
    <property type="resolution" value="3.00 A"/>
    <property type="chains" value="C/G/K/O=258-265"/>
</dbReference>
<dbReference type="PDBsum" id="1JTI"/>
<dbReference type="PDBsum" id="1OVA"/>
<dbReference type="PDBsum" id="1P1Z"/>
<dbReference type="PDBsum" id="1P4L"/>
<dbReference type="PDBsum" id="1UHG"/>
<dbReference type="PDBsum" id="1VAC"/>
<dbReference type="PDBsum" id="3C8K"/>
<dbReference type="PDBsum" id="3CVH"/>
<dbReference type="PDBsum" id="3P9L"/>
<dbReference type="PDBsum" id="3P9M"/>
<dbReference type="PDBsum" id="3PAB"/>
<dbReference type="PDBsum" id="4HKJ"/>
<dbReference type="PCDDB" id="P01012"/>
<dbReference type="SASBDB" id="P01012"/>
<dbReference type="SMR" id="P01012"/>
<dbReference type="BioGRID" id="676326">
    <property type="interactions" value="4"/>
</dbReference>
<dbReference type="FunCoup" id="P01012">
    <property type="interactions" value="62"/>
</dbReference>
<dbReference type="STRING" id="9031.ENSGALP00000036403"/>
<dbReference type="ChEMBL" id="CHEMBL1075085"/>
<dbReference type="Allergome" id="3292">
    <property type="allergen name" value="Gal d 2.0101"/>
</dbReference>
<dbReference type="Allergome" id="360">
    <property type="allergen name" value="Gal d 2"/>
</dbReference>
<dbReference type="MEROPS" id="I04.958"/>
<dbReference type="GlyConnect" id="475">
    <property type="glycosylation" value="57 N-Linked glycans (1 site)"/>
</dbReference>
<dbReference type="GlyCosmos" id="P01012">
    <property type="glycosylation" value="1 site, 73 glycans"/>
</dbReference>
<dbReference type="GlyGen" id="P01012">
    <property type="glycosylation" value="2 sites, 66 N-linked glycans (2 sites), 1 O-linked glycan (1 site)"/>
</dbReference>
<dbReference type="iPTMnet" id="P01012"/>
<dbReference type="PaxDb" id="9031-ENSGALP00000020965"/>
<dbReference type="ABCD" id="P01012">
    <property type="antibodies" value="2 sequenced antibodies"/>
</dbReference>
<dbReference type="Ensembl" id="ENSGALT00010027940.1">
    <property type="protein sequence ID" value="ENSGALP00010016033.1"/>
    <property type="gene ID" value="ENSGALG00010011679.1"/>
</dbReference>
<dbReference type="GeneID" id="396058"/>
<dbReference type="KEGG" id="gga:396058"/>
<dbReference type="CTD" id="396058"/>
<dbReference type="VEuPathDB" id="HostDB:geneid_396058"/>
<dbReference type="eggNOG" id="KOG2392">
    <property type="taxonomic scope" value="Eukaryota"/>
</dbReference>
<dbReference type="GeneTree" id="ENSGT00940000154520"/>
<dbReference type="HOGENOM" id="CLU_023330_0_2_1"/>
<dbReference type="InParanoid" id="P01012"/>
<dbReference type="OMA" id="QMMYQIG"/>
<dbReference type="OrthoDB" id="671595at2759"/>
<dbReference type="PhylomeDB" id="P01012"/>
<dbReference type="TreeFam" id="TF352619"/>
<dbReference type="Reactome" id="R-GGA-6798695">
    <property type="pathway name" value="Neutrophil degranulation"/>
</dbReference>
<dbReference type="Reactome" id="R-GGA-8939242">
    <property type="pathway name" value="RUNX1 regulates transcription of genes involved in differentiation of keratinocytes"/>
</dbReference>
<dbReference type="CD-CODE" id="783B6188">
    <property type="entry name" value="Synthetic Condensate 000211"/>
</dbReference>
<dbReference type="CD-CODE" id="DFAB25C5">
    <property type="entry name" value="Synthetic Condensate 000216"/>
</dbReference>
<dbReference type="EvolutionaryTrace" id="P01012"/>
<dbReference type="PRO" id="PR:P01012"/>
<dbReference type="Proteomes" id="UP000000539">
    <property type="component" value="Chromosome 2"/>
</dbReference>
<dbReference type="Bgee" id="ENSGALG00000012869">
    <property type="expression patterns" value="Expressed in ovary and 2 other cell types or tissues"/>
</dbReference>
<dbReference type="GO" id="GO:0005829">
    <property type="term" value="C:cytosol"/>
    <property type="evidence" value="ECO:0000304"/>
    <property type="project" value="Reactome"/>
</dbReference>
<dbReference type="GO" id="GO:0031905">
    <property type="term" value="C:early endosome lumen"/>
    <property type="evidence" value="ECO:0000304"/>
    <property type="project" value="Reactome"/>
</dbReference>
<dbReference type="GO" id="GO:0005783">
    <property type="term" value="C:endoplasmic reticulum"/>
    <property type="evidence" value="ECO:0000314"/>
    <property type="project" value="AgBase"/>
</dbReference>
<dbReference type="GO" id="GO:0005576">
    <property type="term" value="C:extracellular region"/>
    <property type="evidence" value="ECO:0000304"/>
    <property type="project" value="Reactome"/>
</dbReference>
<dbReference type="GO" id="GO:0005615">
    <property type="term" value="C:extracellular space"/>
    <property type="evidence" value="ECO:0000318"/>
    <property type="project" value="GO_Central"/>
</dbReference>
<dbReference type="GO" id="GO:0043231">
    <property type="term" value="C:intracellular membrane-bounded organelle"/>
    <property type="evidence" value="ECO:0000314"/>
    <property type="project" value="AgBase"/>
</dbReference>
<dbReference type="GO" id="GO:0045335">
    <property type="term" value="C:phagocytic vesicle"/>
    <property type="evidence" value="ECO:0000304"/>
    <property type="project" value="Reactome"/>
</dbReference>
<dbReference type="GO" id="GO:0032010">
    <property type="term" value="C:phagolysosome"/>
    <property type="evidence" value="ECO:0000304"/>
    <property type="project" value="Reactome"/>
</dbReference>
<dbReference type="GO" id="GO:0031982">
    <property type="term" value="C:vesicle"/>
    <property type="evidence" value="ECO:0000314"/>
    <property type="project" value="AgBase"/>
</dbReference>
<dbReference type="GO" id="GO:0005509">
    <property type="term" value="F:calcium ion binding"/>
    <property type="evidence" value="ECO:0000314"/>
    <property type="project" value="UniProtKB"/>
</dbReference>
<dbReference type="GO" id="GO:0002020">
    <property type="term" value="F:protease binding"/>
    <property type="evidence" value="ECO:0000353"/>
    <property type="project" value="AgBase"/>
</dbReference>
<dbReference type="GO" id="GO:0009792">
    <property type="term" value="P:embryo development ending in birth or egg hatching"/>
    <property type="evidence" value="ECO:0000304"/>
    <property type="project" value="AgBase"/>
</dbReference>
<dbReference type="GO" id="GO:0080144">
    <property type="term" value="P:intracellular amino acid homeostasis"/>
    <property type="evidence" value="ECO:0000304"/>
    <property type="project" value="AgBase"/>
</dbReference>
<dbReference type="GO" id="GO:0050801">
    <property type="term" value="P:monoatomic ion homeostasis"/>
    <property type="evidence" value="ECO:0000304"/>
    <property type="project" value="AgBase"/>
</dbReference>
<dbReference type="GO" id="GO:0006811">
    <property type="term" value="P:monoatomic ion transport"/>
    <property type="evidence" value="ECO:0000304"/>
    <property type="project" value="AgBase"/>
</dbReference>
<dbReference type="GO" id="GO:0051412">
    <property type="term" value="P:response to corticosterone"/>
    <property type="evidence" value="ECO:0000314"/>
    <property type="project" value="AgBase"/>
</dbReference>
<dbReference type="GO" id="GO:0043627">
    <property type="term" value="P:response to estrogen"/>
    <property type="evidence" value="ECO:0000314"/>
    <property type="project" value="AgBase"/>
</dbReference>
<dbReference type="GO" id="GO:0032570">
    <property type="term" value="P:response to progesterone"/>
    <property type="evidence" value="ECO:0000314"/>
    <property type="project" value="AgBase"/>
</dbReference>
<dbReference type="GO" id="GO:0048545">
    <property type="term" value="P:response to steroid hormone"/>
    <property type="evidence" value="ECO:0000314"/>
    <property type="project" value="AgBase"/>
</dbReference>
<dbReference type="CDD" id="cd02059">
    <property type="entry name" value="serpinB14_OVA"/>
    <property type="match status" value="1"/>
</dbReference>
<dbReference type="FunFam" id="2.30.39.10:FF:000001">
    <property type="entry name" value="Serpin family B member 2"/>
    <property type="match status" value="1"/>
</dbReference>
<dbReference type="Gene3D" id="2.30.39.10">
    <property type="entry name" value="Alpha-1-antitrypsin, domain 1"/>
    <property type="match status" value="1"/>
</dbReference>
<dbReference type="Gene3D" id="3.30.497.10">
    <property type="entry name" value="Antithrombin, subunit I, domain 2"/>
    <property type="match status" value="1"/>
</dbReference>
<dbReference type="InterPro" id="IPR023795">
    <property type="entry name" value="Serpin_CS"/>
</dbReference>
<dbReference type="InterPro" id="IPR023796">
    <property type="entry name" value="Serpin_dom"/>
</dbReference>
<dbReference type="InterPro" id="IPR000215">
    <property type="entry name" value="Serpin_fam"/>
</dbReference>
<dbReference type="InterPro" id="IPR036186">
    <property type="entry name" value="Serpin_sf"/>
</dbReference>
<dbReference type="InterPro" id="IPR042178">
    <property type="entry name" value="Serpin_sf_1"/>
</dbReference>
<dbReference type="InterPro" id="IPR042185">
    <property type="entry name" value="Serpin_sf_2"/>
</dbReference>
<dbReference type="PANTHER" id="PTHR11461">
    <property type="entry name" value="SERINE PROTEASE INHIBITOR, SERPIN"/>
    <property type="match status" value="1"/>
</dbReference>
<dbReference type="PANTHER" id="PTHR11461:SF186">
    <property type="entry name" value="SERPIN B4"/>
    <property type="match status" value="1"/>
</dbReference>
<dbReference type="Pfam" id="PF00079">
    <property type="entry name" value="Serpin"/>
    <property type="match status" value="1"/>
</dbReference>
<dbReference type="SMART" id="SM00093">
    <property type="entry name" value="SERPIN"/>
    <property type="match status" value="1"/>
</dbReference>
<dbReference type="SUPFAM" id="SSF56574">
    <property type="entry name" value="Serpins"/>
    <property type="match status" value="1"/>
</dbReference>
<dbReference type="PROSITE" id="PS00284">
    <property type="entry name" value="SERPIN"/>
    <property type="match status" value="1"/>
</dbReference>